<protein>
    <recommendedName>
        <fullName evidence="1">ATP synthase gamma chain</fullName>
    </recommendedName>
    <alternativeName>
        <fullName evidence="1">ATP synthase F1 sector gamma subunit</fullName>
    </alternativeName>
    <alternativeName>
        <fullName evidence="1">F-ATPase gamma subunit</fullName>
    </alternativeName>
</protein>
<accession>B5XKQ0</accession>
<dbReference type="EMBL" id="CP000829">
    <property type="protein sequence ID" value="ACI60912.1"/>
    <property type="molecule type" value="Genomic_DNA"/>
</dbReference>
<dbReference type="SMR" id="B5XKQ0"/>
<dbReference type="KEGG" id="soz:Spy49_0587"/>
<dbReference type="HOGENOM" id="CLU_050669_0_1_9"/>
<dbReference type="Proteomes" id="UP000001039">
    <property type="component" value="Chromosome"/>
</dbReference>
<dbReference type="GO" id="GO:0005886">
    <property type="term" value="C:plasma membrane"/>
    <property type="evidence" value="ECO:0007669"/>
    <property type="project" value="UniProtKB-SubCell"/>
</dbReference>
<dbReference type="GO" id="GO:0045259">
    <property type="term" value="C:proton-transporting ATP synthase complex"/>
    <property type="evidence" value="ECO:0007669"/>
    <property type="project" value="UniProtKB-KW"/>
</dbReference>
<dbReference type="GO" id="GO:0005524">
    <property type="term" value="F:ATP binding"/>
    <property type="evidence" value="ECO:0007669"/>
    <property type="project" value="UniProtKB-UniRule"/>
</dbReference>
<dbReference type="GO" id="GO:0046933">
    <property type="term" value="F:proton-transporting ATP synthase activity, rotational mechanism"/>
    <property type="evidence" value="ECO:0007669"/>
    <property type="project" value="UniProtKB-UniRule"/>
</dbReference>
<dbReference type="GO" id="GO:0042777">
    <property type="term" value="P:proton motive force-driven plasma membrane ATP synthesis"/>
    <property type="evidence" value="ECO:0007669"/>
    <property type="project" value="UniProtKB-UniRule"/>
</dbReference>
<dbReference type="CDD" id="cd12151">
    <property type="entry name" value="F1-ATPase_gamma"/>
    <property type="match status" value="1"/>
</dbReference>
<dbReference type="FunFam" id="3.40.1380.10:FF:000002">
    <property type="entry name" value="ATP synthase gamma chain"/>
    <property type="match status" value="1"/>
</dbReference>
<dbReference type="Gene3D" id="3.40.1380.10">
    <property type="match status" value="1"/>
</dbReference>
<dbReference type="Gene3D" id="1.10.287.80">
    <property type="entry name" value="ATP synthase, gamma subunit, helix hairpin domain"/>
    <property type="match status" value="1"/>
</dbReference>
<dbReference type="HAMAP" id="MF_00815">
    <property type="entry name" value="ATP_synth_gamma_bact"/>
    <property type="match status" value="1"/>
</dbReference>
<dbReference type="InterPro" id="IPR035968">
    <property type="entry name" value="ATP_synth_F1_ATPase_gsu"/>
</dbReference>
<dbReference type="InterPro" id="IPR000131">
    <property type="entry name" value="ATP_synth_F1_gsu"/>
</dbReference>
<dbReference type="InterPro" id="IPR023632">
    <property type="entry name" value="ATP_synth_F1_gsu_CS"/>
</dbReference>
<dbReference type="NCBIfam" id="TIGR01146">
    <property type="entry name" value="ATPsyn_F1gamma"/>
    <property type="match status" value="1"/>
</dbReference>
<dbReference type="NCBIfam" id="NF004147">
    <property type="entry name" value="PRK05621.2-1"/>
    <property type="match status" value="1"/>
</dbReference>
<dbReference type="PANTHER" id="PTHR11693">
    <property type="entry name" value="ATP SYNTHASE GAMMA CHAIN"/>
    <property type="match status" value="1"/>
</dbReference>
<dbReference type="PANTHER" id="PTHR11693:SF22">
    <property type="entry name" value="ATP SYNTHASE SUBUNIT GAMMA, MITOCHONDRIAL"/>
    <property type="match status" value="1"/>
</dbReference>
<dbReference type="Pfam" id="PF00231">
    <property type="entry name" value="ATP-synt"/>
    <property type="match status" value="1"/>
</dbReference>
<dbReference type="PRINTS" id="PR00126">
    <property type="entry name" value="ATPASEGAMMA"/>
</dbReference>
<dbReference type="SUPFAM" id="SSF52943">
    <property type="entry name" value="ATP synthase (F1-ATPase), gamma subunit"/>
    <property type="match status" value="1"/>
</dbReference>
<dbReference type="PROSITE" id="PS00153">
    <property type="entry name" value="ATPASE_GAMMA"/>
    <property type="match status" value="1"/>
</dbReference>
<gene>
    <name evidence="1" type="primary">atpG</name>
    <name type="ordered locus">Spy49_0587</name>
</gene>
<sequence length="291" mass="31987">MAGSLSEIKAKIISTEKTSKITSAMRMVSSAKLVKSEQAARDFQIYASKIRQITTDLLKSELTIGSDNPMLVSRPVKKTGYIVITSDKGLVGGYNSKILKSVMDMITEYHADGDYEIISIGSVGSDFFKARGMNVAFELRGLADQPSFEQVRQIISQSVDMFVNEIFDELYVCYNHHVNSLTSQVRVQQMLPISDLVADEAAEEGVTGFELEPNRQDILDQLLPQFTESLIYGAIIDAKTAEHAAGMTAMQTATDNAKNVINDLTIQYNRARQAAITQEITEIVAGANALE</sequence>
<keyword id="KW-0066">ATP synthesis</keyword>
<keyword id="KW-1003">Cell membrane</keyword>
<keyword id="KW-0139">CF(1)</keyword>
<keyword id="KW-0375">Hydrogen ion transport</keyword>
<keyword id="KW-0406">Ion transport</keyword>
<keyword id="KW-0472">Membrane</keyword>
<keyword id="KW-0813">Transport</keyword>
<evidence type="ECO:0000255" key="1">
    <source>
        <dbReference type="HAMAP-Rule" id="MF_00815"/>
    </source>
</evidence>
<proteinExistence type="inferred from homology"/>
<organism>
    <name type="scientific">Streptococcus pyogenes serotype M49 (strain NZ131)</name>
    <dbReference type="NCBI Taxonomy" id="471876"/>
    <lineage>
        <taxon>Bacteria</taxon>
        <taxon>Bacillati</taxon>
        <taxon>Bacillota</taxon>
        <taxon>Bacilli</taxon>
        <taxon>Lactobacillales</taxon>
        <taxon>Streptococcaceae</taxon>
        <taxon>Streptococcus</taxon>
    </lineage>
</organism>
<feature type="chain" id="PRO_1000134215" description="ATP synthase gamma chain">
    <location>
        <begin position="1"/>
        <end position="291"/>
    </location>
</feature>
<comment type="function">
    <text evidence="1">Produces ATP from ADP in the presence of a proton gradient across the membrane. The gamma chain is believed to be important in regulating ATPase activity and the flow of protons through the CF(0) complex.</text>
</comment>
<comment type="subunit">
    <text evidence="1">F-type ATPases have 2 components, CF(1) - the catalytic core - and CF(0) - the membrane proton channel. CF(1) has five subunits: alpha(3), beta(3), gamma(1), delta(1), epsilon(1). CF(0) has three main subunits: a, b and c.</text>
</comment>
<comment type="subcellular location">
    <subcellularLocation>
        <location evidence="1">Cell membrane</location>
        <topology evidence="1">Peripheral membrane protein</topology>
    </subcellularLocation>
</comment>
<comment type="similarity">
    <text evidence="1">Belongs to the ATPase gamma chain family.</text>
</comment>
<reference key="1">
    <citation type="journal article" date="2008" name="J. Bacteriol.">
        <title>Genome sequence of a nephritogenic and highly transformable M49 strain of Streptococcus pyogenes.</title>
        <authorList>
            <person name="McShan W.M."/>
            <person name="Ferretti J.J."/>
            <person name="Karasawa T."/>
            <person name="Suvorov A.N."/>
            <person name="Lin S."/>
            <person name="Qin B."/>
            <person name="Jia H."/>
            <person name="Kenton S."/>
            <person name="Najar F."/>
            <person name="Wu H."/>
            <person name="Scott J."/>
            <person name="Roe B.A."/>
            <person name="Savic D.J."/>
        </authorList>
    </citation>
    <scope>NUCLEOTIDE SEQUENCE [LARGE SCALE GENOMIC DNA]</scope>
    <source>
        <strain>NZ131</strain>
    </source>
</reference>
<name>ATPG_STRPZ</name>